<evidence type="ECO:0000255" key="1">
    <source>
        <dbReference type="HAMAP-Rule" id="MF_00464"/>
    </source>
</evidence>
<feature type="chain" id="PRO_1000125475" description="S-adenosylmethionine decarboxylase beta chain" evidence="1">
    <location>
        <begin position="1"/>
        <end position="62"/>
    </location>
</feature>
<feature type="chain" id="PRO_1000125476" description="S-adenosylmethionine decarboxylase alpha chain" evidence="1">
    <location>
        <begin position="63"/>
        <end position="135"/>
    </location>
</feature>
<feature type="active site" description="Schiff-base intermediate with substrate; via pyruvic acid" evidence="1">
    <location>
        <position position="63"/>
    </location>
</feature>
<feature type="active site" description="Proton acceptor; for processing activity" evidence="1">
    <location>
        <position position="68"/>
    </location>
</feature>
<feature type="active site" description="Proton donor; for catalytic activity" evidence="1">
    <location>
        <position position="83"/>
    </location>
</feature>
<feature type="site" description="Cleavage (non-hydrolytic); by autolysis" evidence="1">
    <location>
        <begin position="62"/>
        <end position="63"/>
    </location>
</feature>
<feature type="modified residue" description="Pyruvic acid (Ser); by autocatalysis" evidence="1">
    <location>
        <position position="63"/>
    </location>
</feature>
<protein>
    <recommendedName>
        <fullName evidence="1">S-adenosylmethionine decarboxylase proenzyme</fullName>
        <shortName evidence="1">AdoMetDC</shortName>
        <shortName evidence="1">SAMDC</shortName>
        <ecNumber evidence="1">4.1.1.50</ecNumber>
    </recommendedName>
    <component>
        <recommendedName>
            <fullName evidence="1">S-adenosylmethionine decarboxylase beta chain</fullName>
        </recommendedName>
    </component>
    <component>
        <recommendedName>
            <fullName evidence="1">S-adenosylmethionine decarboxylase alpha chain</fullName>
        </recommendedName>
    </component>
</protein>
<dbReference type="EC" id="4.1.1.50" evidence="1"/>
<dbReference type="EMBL" id="CP001147">
    <property type="protein sequence ID" value="ACI21185.1"/>
    <property type="molecule type" value="Genomic_DNA"/>
</dbReference>
<dbReference type="RefSeq" id="WP_012545906.1">
    <property type="nucleotide sequence ID" value="NC_011296.1"/>
</dbReference>
<dbReference type="RefSeq" id="YP_002248094.1">
    <property type="nucleotide sequence ID" value="NC_011296.1"/>
</dbReference>
<dbReference type="SMR" id="B5YI28"/>
<dbReference type="STRING" id="289376.THEYE_A0245"/>
<dbReference type="EnsemblBacteria" id="ACI21185">
    <property type="protein sequence ID" value="ACI21185"/>
    <property type="gene ID" value="THEYE_A0245"/>
</dbReference>
<dbReference type="KEGG" id="tye:THEYE_A0245"/>
<dbReference type="PATRIC" id="fig|289376.4.peg.242"/>
<dbReference type="eggNOG" id="COG1586">
    <property type="taxonomic scope" value="Bacteria"/>
</dbReference>
<dbReference type="HOGENOM" id="CLU_125470_2_3_0"/>
<dbReference type="InParanoid" id="B5YI28"/>
<dbReference type="OrthoDB" id="9793120at2"/>
<dbReference type="UniPathway" id="UPA00331">
    <property type="reaction ID" value="UER00451"/>
</dbReference>
<dbReference type="Proteomes" id="UP000000718">
    <property type="component" value="Chromosome"/>
</dbReference>
<dbReference type="GO" id="GO:0005829">
    <property type="term" value="C:cytosol"/>
    <property type="evidence" value="ECO:0000318"/>
    <property type="project" value="GO_Central"/>
</dbReference>
<dbReference type="GO" id="GO:0004014">
    <property type="term" value="F:adenosylmethionine decarboxylase activity"/>
    <property type="evidence" value="ECO:0000318"/>
    <property type="project" value="GO_Central"/>
</dbReference>
<dbReference type="GO" id="GO:0008295">
    <property type="term" value="P:spermidine biosynthetic process"/>
    <property type="evidence" value="ECO:0000318"/>
    <property type="project" value="GO_Central"/>
</dbReference>
<dbReference type="FunFam" id="3.30.160.750:FF:000004">
    <property type="entry name" value="S-adenosylmethionine decarboxylase proenzyme"/>
    <property type="match status" value="1"/>
</dbReference>
<dbReference type="FunFam" id="3.30.360.110:FF:000001">
    <property type="entry name" value="S-adenosylmethionine decarboxylase proenzyme"/>
    <property type="match status" value="1"/>
</dbReference>
<dbReference type="Gene3D" id="3.30.160.750">
    <property type="match status" value="1"/>
</dbReference>
<dbReference type="Gene3D" id="3.30.360.110">
    <property type="entry name" value="S-adenosylmethionine decarboxylase domain"/>
    <property type="match status" value="1"/>
</dbReference>
<dbReference type="HAMAP" id="MF_00464">
    <property type="entry name" value="AdoMetDC_1"/>
    <property type="match status" value="1"/>
</dbReference>
<dbReference type="InterPro" id="IPR042286">
    <property type="entry name" value="AdoMetDC_C"/>
</dbReference>
<dbReference type="InterPro" id="IPR003826">
    <property type="entry name" value="AdoMetDC_fam_prok"/>
</dbReference>
<dbReference type="InterPro" id="IPR042284">
    <property type="entry name" value="AdoMetDC_N"/>
</dbReference>
<dbReference type="InterPro" id="IPR016067">
    <property type="entry name" value="S-AdoMet_deCO2ase_core"/>
</dbReference>
<dbReference type="InterPro" id="IPR017716">
    <property type="entry name" value="S-AdoMet_deCOase_pro-enz"/>
</dbReference>
<dbReference type="NCBIfam" id="TIGR03330">
    <property type="entry name" value="SAM_DCase_Bsu"/>
    <property type="match status" value="1"/>
</dbReference>
<dbReference type="PANTHER" id="PTHR33866">
    <property type="entry name" value="S-ADENOSYLMETHIONINE DECARBOXYLASE PROENZYME"/>
    <property type="match status" value="1"/>
</dbReference>
<dbReference type="PANTHER" id="PTHR33866:SF2">
    <property type="entry name" value="S-ADENOSYLMETHIONINE DECARBOXYLASE PROENZYME"/>
    <property type="match status" value="1"/>
</dbReference>
<dbReference type="Pfam" id="PF02675">
    <property type="entry name" value="AdoMet_dc"/>
    <property type="match status" value="1"/>
</dbReference>
<dbReference type="SUPFAM" id="SSF56276">
    <property type="entry name" value="S-adenosylmethionine decarboxylase"/>
    <property type="match status" value="1"/>
</dbReference>
<sequence length="135" mass="15131">MYALGTHLLIELKNCNPEILKDLESVKNILVDAAKKANATIISVNFHEFNPFGISGVVVIAESHLTIHTWPEYGFAAVDVFTCGETIKPEIAAQYIIEAFECKVPSIVEMKRGIISHRNEKLPHKVCHEELQVVY</sequence>
<keyword id="KW-0068">Autocatalytic cleavage</keyword>
<keyword id="KW-0210">Decarboxylase</keyword>
<keyword id="KW-0456">Lyase</keyword>
<keyword id="KW-0620">Polyamine biosynthesis</keyword>
<keyword id="KW-0670">Pyruvate</keyword>
<keyword id="KW-1185">Reference proteome</keyword>
<keyword id="KW-0949">S-adenosyl-L-methionine</keyword>
<keyword id="KW-0704">Schiff base</keyword>
<keyword id="KW-0745">Spermidine biosynthesis</keyword>
<keyword id="KW-0865">Zymogen</keyword>
<comment type="function">
    <text evidence="1">Catalyzes the decarboxylation of S-adenosylmethionine to S-adenosylmethioninamine (dcAdoMet), the propylamine donor required for the synthesis of the polyamines spermine and spermidine from the diamine putrescine.</text>
</comment>
<comment type="catalytic activity">
    <reaction evidence="1">
        <text>S-adenosyl-L-methionine + H(+) = S-adenosyl 3-(methylsulfanyl)propylamine + CO2</text>
        <dbReference type="Rhea" id="RHEA:15981"/>
        <dbReference type="ChEBI" id="CHEBI:15378"/>
        <dbReference type="ChEBI" id="CHEBI:16526"/>
        <dbReference type="ChEBI" id="CHEBI:57443"/>
        <dbReference type="ChEBI" id="CHEBI:59789"/>
        <dbReference type="EC" id="4.1.1.50"/>
    </reaction>
</comment>
<comment type="cofactor">
    <cofactor evidence="1">
        <name>pyruvate</name>
        <dbReference type="ChEBI" id="CHEBI:15361"/>
    </cofactor>
    <text evidence="1">Binds 1 pyruvoyl group covalently per subunit.</text>
</comment>
<comment type="pathway">
    <text evidence="1">Amine and polyamine biosynthesis; S-adenosylmethioninamine biosynthesis; S-adenosylmethioninamine from S-adenosyl-L-methionine: step 1/1.</text>
</comment>
<comment type="subunit">
    <text evidence="1">Heterotetramer of two alpha and two beta chains arranged as a dimer of alpha/beta heterodimers.</text>
</comment>
<comment type="PTM">
    <text evidence="1">Is synthesized initially as an inactive proenzyme. Formation of the active enzyme involves a self-maturation process in which the active site pyruvoyl group is generated from an internal serine residue via an autocatalytic post-translational modification. Two non-identical subunits are generated from the proenzyme in this reaction, and the pyruvate is formed at the N-terminus of the alpha chain, which is derived from the carboxyl end of the proenzyme. The post-translation cleavage follows an unusual pathway, termed non-hydrolytic serinolysis, in which the side chain hydroxyl group of the serine supplies its oxygen atom to form the C-terminus of the beta chain, while the remainder of the serine residue undergoes an oxidative deamination to produce ammonia and the pyruvoyl group blocking the N-terminus of the alpha chain.</text>
</comment>
<comment type="similarity">
    <text evidence="1">Belongs to the prokaryotic AdoMetDC family. Type 1 subfamily.</text>
</comment>
<accession>B5YI28</accession>
<proteinExistence type="inferred from homology"/>
<reference key="1">
    <citation type="submission" date="2008-08" db="EMBL/GenBank/DDBJ databases">
        <title>The complete genome sequence of Thermodesulfovibrio yellowstonii strain ATCC 51303 / DSM 11347 / YP87.</title>
        <authorList>
            <person name="Dodson R.J."/>
            <person name="Durkin A.S."/>
            <person name="Wu M."/>
            <person name="Eisen J."/>
            <person name="Sutton G."/>
        </authorList>
    </citation>
    <scope>NUCLEOTIDE SEQUENCE [LARGE SCALE GENOMIC DNA]</scope>
    <source>
        <strain>ATCC 51303 / DSM 11347 / YP87</strain>
    </source>
</reference>
<gene>
    <name evidence="1" type="primary">speH</name>
    <name type="ordered locus">THEYE_A0245</name>
</gene>
<organism>
    <name type="scientific">Thermodesulfovibrio yellowstonii (strain ATCC 51303 / DSM 11347 / YP87)</name>
    <dbReference type="NCBI Taxonomy" id="289376"/>
    <lineage>
        <taxon>Bacteria</taxon>
        <taxon>Pseudomonadati</taxon>
        <taxon>Nitrospirota</taxon>
        <taxon>Thermodesulfovibrionia</taxon>
        <taxon>Thermodesulfovibrionales</taxon>
        <taxon>Thermodesulfovibrionaceae</taxon>
        <taxon>Thermodesulfovibrio</taxon>
    </lineage>
</organism>
<name>SPEH_THEYD</name>